<reference key="1">
    <citation type="journal article" date="2003" name="Proc. Natl. Acad. Sci. U.S.A.">
        <title>Reductive genome evolution in Buchnera aphidicola.</title>
        <authorList>
            <person name="van Ham R.C.H.J."/>
            <person name="Kamerbeek J."/>
            <person name="Palacios C."/>
            <person name="Rausell C."/>
            <person name="Abascal F."/>
            <person name="Bastolla U."/>
            <person name="Fernandez J.M."/>
            <person name="Jimenez L."/>
            <person name="Postigo M."/>
            <person name="Silva F.J."/>
            <person name="Tamames J."/>
            <person name="Viguera E."/>
            <person name="Latorre A."/>
            <person name="Valencia A."/>
            <person name="Moran F."/>
            <person name="Moya A."/>
        </authorList>
    </citation>
    <scope>NUCLEOTIDE SEQUENCE [LARGE SCALE GENOMIC DNA]</scope>
    <source>
        <strain>Bp</strain>
    </source>
</reference>
<keyword id="KW-0143">Chaperone</keyword>
<keyword id="KW-0963">Cytoplasm</keyword>
<keyword id="KW-1185">Reference proteome</keyword>
<keyword id="KW-0690">Ribosome biogenesis</keyword>
<keyword id="KW-0698">rRNA processing</keyword>
<comment type="function">
    <text evidence="1">An accessory protein needed during the final step in the assembly of 30S ribosomal subunit, possibly for assembly of the head region. Essential for efficient processing of 16S rRNA. May be needed both before and after RbfA during the maturation of 16S rRNA. It has affinity for free ribosomal 30S subunits but not for 70S ribosomes.</text>
</comment>
<comment type="subunit">
    <text evidence="1">Binds ribosomal protein uS19.</text>
</comment>
<comment type="subcellular location">
    <subcellularLocation>
        <location evidence="1">Cytoplasm</location>
    </subcellularLocation>
</comment>
<comment type="domain">
    <text evidence="1">The PRC barrel domain binds ribosomal protein uS19.</text>
</comment>
<comment type="similarity">
    <text evidence="1">Belongs to the RimM family.</text>
</comment>
<evidence type="ECO:0000255" key="1">
    <source>
        <dbReference type="HAMAP-Rule" id="MF_00014"/>
    </source>
</evidence>
<accession>P59425</accession>
<name>RIMM_BUCBP</name>
<organism>
    <name type="scientific">Buchnera aphidicola subsp. Baizongia pistaciae (strain Bp)</name>
    <dbReference type="NCBI Taxonomy" id="224915"/>
    <lineage>
        <taxon>Bacteria</taxon>
        <taxon>Pseudomonadati</taxon>
        <taxon>Pseudomonadota</taxon>
        <taxon>Gammaproteobacteria</taxon>
        <taxon>Enterobacterales</taxon>
        <taxon>Erwiniaceae</taxon>
        <taxon>Buchnera</taxon>
    </lineage>
</organism>
<dbReference type="EMBL" id="AE016826">
    <property type="protein sequence ID" value="AAO27077.1"/>
    <property type="molecule type" value="Genomic_DNA"/>
</dbReference>
<dbReference type="RefSeq" id="WP_011091478.1">
    <property type="nucleotide sequence ID" value="NC_004545.1"/>
</dbReference>
<dbReference type="SMR" id="P59425"/>
<dbReference type="STRING" id="224915.bbp_358"/>
<dbReference type="KEGG" id="bab:bbp_358"/>
<dbReference type="eggNOG" id="COG0806">
    <property type="taxonomic scope" value="Bacteria"/>
</dbReference>
<dbReference type="HOGENOM" id="CLU_077636_1_0_6"/>
<dbReference type="OrthoDB" id="9783509at2"/>
<dbReference type="Proteomes" id="UP000000601">
    <property type="component" value="Chromosome"/>
</dbReference>
<dbReference type="GO" id="GO:0005737">
    <property type="term" value="C:cytoplasm"/>
    <property type="evidence" value="ECO:0007669"/>
    <property type="project" value="UniProtKB-SubCell"/>
</dbReference>
<dbReference type="GO" id="GO:0005840">
    <property type="term" value="C:ribosome"/>
    <property type="evidence" value="ECO:0007669"/>
    <property type="project" value="InterPro"/>
</dbReference>
<dbReference type="GO" id="GO:0043022">
    <property type="term" value="F:ribosome binding"/>
    <property type="evidence" value="ECO:0007669"/>
    <property type="project" value="InterPro"/>
</dbReference>
<dbReference type="GO" id="GO:0042274">
    <property type="term" value="P:ribosomal small subunit biogenesis"/>
    <property type="evidence" value="ECO:0007669"/>
    <property type="project" value="UniProtKB-UniRule"/>
</dbReference>
<dbReference type="GO" id="GO:0006364">
    <property type="term" value="P:rRNA processing"/>
    <property type="evidence" value="ECO:0007669"/>
    <property type="project" value="UniProtKB-UniRule"/>
</dbReference>
<dbReference type="Gene3D" id="2.30.30.240">
    <property type="entry name" value="PRC-barrel domain"/>
    <property type="match status" value="1"/>
</dbReference>
<dbReference type="Gene3D" id="2.40.30.60">
    <property type="entry name" value="RimM"/>
    <property type="match status" value="1"/>
</dbReference>
<dbReference type="HAMAP" id="MF_00014">
    <property type="entry name" value="Ribosome_mat_RimM"/>
    <property type="match status" value="1"/>
</dbReference>
<dbReference type="InterPro" id="IPR027275">
    <property type="entry name" value="PRC-brl_dom"/>
</dbReference>
<dbReference type="InterPro" id="IPR011033">
    <property type="entry name" value="PRC_barrel-like_sf"/>
</dbReference>
<dbReference type="InterPro" id="IPR011961">
    <property type="entry name" value="RimM"/>
</dbReference>
<dbReference type="InterPro" id="IPR002676">
    <property type="entry name" value="RimM_N"/>
</dbReference>
<dbReference type="InterPro" id="IPR036976">
    <property type="entry name" value="RimM_N_sf"/>
</dbReference>
<dbReference type="InterPro" id="IPR009000">
    <property type="entry name" value="Transl_B-barrel_sf"/>
</dbReference>
<dbReference type="NCBIfam" id="TIGR02273">
    <property type="entry name" value="16S_RimM"/>
    <property type="match status" value="1"/>
</dbReference>
<dbReference type="PANTHER" id="PTHR33692">
    <property type="entry name" value="RIBOSOME MATURATION FACTOR RIMM"/>
    <property type="match status" value="1"/>
</dbReference>
<dbReference type="PANTHER" id="PTHR33692:SF1">
    <property type="entry name" value="RIBOSOME MATURATION FACTOR RIMM"/>
    <property type="match status" value="1"/>
</dbReference>
<dbReference type="Pfam" id="PF05239">
    <property type="entry name" value="PRC"/>
    <property type="match status" value="1"/>
</dbReference>
<dbReference type="Pfam" id="PF01782">
    <property type="entry name" value="RimM"/>
    <property type="match status" value="1"/>
</dbReference>
<dbReference type="SUPFAM" id="SSF50346">
    <property type="entry name" value="PRC-barrel domain"/>
    <property type="match status" value="1"/>
</dbReference>
<dbReference type="SUPFAM" id="SSF50447">
    <property type="entry name" value="Translation proteins"/>
    <property type="match status" value="1"/>
</dbReference>
<protein>
    <recommendedName>
        <fullName evidence="1">Ribosome maturation factor RimM</fullName>
    </recommendedName>
</protein>
<feature type="chain" id="PRO_0000163268" description="Ribosome maturation factor RimM">
    <location>
        <begin position="1"/>
        <end position="180"/>
    </location>
</feature>
<feature type="domain" description="PRC barrel" evidence="1">
    <location>
        <begin position="99"/>
        <end position="179"/>
    </location>
</feature>
<proteinExistence type="inferred from homology"/>
<sequence>MTKKFLNIHLTIAKFGAAHGILGWIRVFSYTEKKENIFDYVPWFIKKEQKIIKILPKYWKILKKTFLVKINDVNNRSMAQKLTNYDILINQKTLPKLNNNEYYWKDIVDCTVFDTNFIKLGRVSELIRTPSNDILVVKASNIKNISQNDMLIPFLHPQIISEVNINNKKIVIKNWKQTFE</sequence>
<gene>
    <name evidence="1" type="primary">rimM</name>
    <name type="ordered locus">bbp_358</name>
</gene>